<keyword id="KW-0002">3D-structure</keyword>
<keyword id="KW-0025">Alternative splicing</keyword>
<keyword id="KW-0131">Cell cycle</keyword>
<keyword id="KW-0132">Cell division</keyword>
<keyword id="KW-0221">Differentiation</keyword>
<keyword id="KW-0498">Mitosis</keyword>
<keyword id="KW-0524">Neurogenesis</keyword>
<keyword id="KW-0597">Phosphoprotein</keyword>
<keyword id="KW-1267">Proteomics identification</keyword>
<keyword id="KW-1185">Reference proteome</keyword>
<keyword id="KW-0833">Ubl conjugation pathway</keyword>
<dbReference type="EMBL" id="AF191337">
    <property type="protein sequence ID" value="AAF05751.1"/>
    <property type="molecule type" value="mRNA"/>
</dbReference>
<dbReference type="EMBL" id="AL929554">
    <property type="status" value="NOT_ANNOTATED_CDS"/>
    <property type="molecule type" value="Genomic_DNA"/>
</dbReference>
<dbReference type="EMBL" id="BC032503">
    <property type="protein sequence ID" value="AAH32503.1"/>
    <property type="molecule type" value="mRNA"/>
</dbReference>
<dbReference type="EMBL" id="BC001579">
    <property type="protein sequence ID" value="AAH01579.1"/>
    <property type="molecule type" value="mRNA"/>
</dbReference>
<dbReference type="EMBL" id="BC009487">
    <property type="protein sequence ID" value="AAH09487.2"/>
    <property type="status" value="ALT_SEQ"/>
    <property type="molecule type" value="mRNA"/>
</dbReference>
<dbReference type="EMBL" id="AB037827">
    <property type="protein sequence ID" value="BAA92644.1"/>
    <property type="molecule type" value="mRNA"/>
</dbReference>
<dbReference type="CCDS" id="CCDS7033.1">
    <molecule id="Q9UJX6-1"/>
</dbReference>
<dbReference type="RefSeq" id="NP_037498.1">
    <molecule id="Q9UJX6-1"/>
    <property type="nucleotide sequence ID" value="NM_013366.4"/>
</dbReference>
<dbReference type="PDB" id="4UI9">
    <property type="method" value="EM"/>
    <property type="resolution" value="3.60 A"/>
    <property type="chains" value="N=1-822"/>
</dbReference>
<dbReference type="PDB" id="4YII">
    <property type="method" value="X-ray"/>
    <property type="resolution" value="1.80 A"/>
    <property type="chains" value="A=735-822"/>
</dbReference>
<dbReference type="PDB" id="5A31">
    <property type="method" value="EM"/>
    <property type="resolution" value="4.30 A"/>
    <property type="chains" value="N=74-818"/>
</dbReference>
<dbReference type="PDB" id="5G04">
    <property type="method" value="EM"/>
    <property type="resolution" value="4.00 A"/>
    <property type="chains" value="N=1-822"/>
</dbReference>
<dbReference type="PDB" id="5G05">
    <property type="method" value="EM"/>
    <property type="resolution" value="3.40 A"/>
    <property type="chains" value="N=1-822"/>
</dbReference>
<dbReference type="PDB" id="5KHR">
    <property type="method" value="EM"/>
    <property type="resolution" value="6.10 A"/>
    <property type="chains" value="N=1-822"/>
</dbReference>
<dbReference type="PDB" id="5KHU">
    <property type="method" value="EM"/>
    <property type="resolution" value="4.80 A"/>
    <property type="chains" value="N=1-822"/>
</dbReference>
<dbReference type="PDB" id="5L9T">
    <property type="method" value="EM"/>
    <property type="resolution" value="6.40 A"/>
    <property type="chains" value="N=1-822"/>
</dbReference>
<dbReference type="PDB" id="5L9U">
    <property type="method" value="EM"/>
    <property type="resolution" value="6.40 A"/>
    <property type="chains" value="N=1-822"/>
</dbReference>
<dbReference type="PDB" id="5LCW">
    <property type="method" value="EM"/>
    <property type="resolution" value="4.00 A"/>
    <property type="chains" value="N=1-822"/>
</dbReference>
<dbReference type="PDB" id="6NXK">
    <property type="method" value="X-ray"/>
    <property type="resolution" value="2.20 A"/>
    <property type="chains" value="C/D=735-822"/>
</dbReference>
<dbReference type="PDB" id="6OB1">
    <property type="method" value="NMR"/>
    <property type="chains" value="C=735-822"/>
</dbReference>
<dbReference type="PDB" id="6Q6G">
    <property type="method" value="EM"/>
    <property type="resolution" value="3.20 A"/>
    <property type="chains" value="N=1-822"/>
</dbReference>
<dbReference type="PDB" id="6Q6H">
    <property type="method" value="EM"/>
    <property type="resolution" value="3.20 A"/>
    <property type="chains" value="N=1-822"/>
</dbReference>
<dbReference type="PDB" id="6TLJ">
    <property type="method" value="EM"/>
    <property type="resolution" value="3.80 A"/>
    <property type="chains" value="N=1-822"/>
</dbReference>
<dbReference type="PDB" id="6TM5">
    <property type="method" value="EM"/>
    <property type="resolution" value="3.90 A"/>
    <property type="chains" value="N=1-822"/>
</dbReference>
<dbReference type="PDB" id="6TNT">
    <property type="method" value="EM"/>
    <property type="resolution" value="3.78 A"/>
    <property type="chains" value="N=1-822"/>
</dbReference>
<dbReference type="PDB" id="8PKP">
    <property type="method" value="EM"/>
    <property type="resolution" value="3.20 A"/>
    <property type="chains" value="N=1-822"/>
</dbReference>
<dbReference type="PDB" id="8TAR">
    <property type="method" value="EM"/>
    <property type="resolution" value="4.00 A"/>
    <property type="chains" value="N=1-822"/>
</dbReference>
<dbReference type="PDB" id="8TAU">
    <property type="method" value="EM"/>
    <property type="resolution" value="3.50 A"/>
    <property type="chains" value="N=1-822"/>
</dbReference>
<dbReference type="PDB" id="9GAW">
    <property type="method" value="EM"/>
    <property type="resolution" value="2.90 A"/>
    <property type="chains" value="N=1-822"/>
</dbReference>
<dbReference type="PDBsum" id="4UI9"/>
<dbReference type="PDBsum" id="4YII"/>
<dbReference type="PDBsum" id="5A31"/>
<dbReference type="PDBsum" id="5G04"/>
<dbReference type="PDBsum" id="5G05"/>
<dbReference type="PDBsum" id="5KHR"/>
<dbReference type="PDBsum" id="5KHU"/>
<dbReference type="PDBsum" id="5L9T"/>
<dbReference type="PDBsum" id="5L9U"/>
<dbReference type="PDBsum" id="5LCW"/>
<dbReference type="PDBsum" id="6NXK"/>
<dbReference type="PDBsum" id="6OB1"/>
<dbReference type="PDBsum" id="6Q6G"/>
<dbReference type="PDBsum" id="6Q6H"/>
<dbReference type="PDBsum" id="6TLJ"/>
<dbReference type="PDBsum" id="6TM5"/>
<dbReference type="PDBsum" id="6TNT"/>
<dbReference type="PDBsum" id="8PKP"/>
<dbReference type="PDBsum" id="8TAR"/>
<dbReference type="PDBsum" id="8TAU"/>
<dbReference type="PDBsum" id="9GAW"/>
<dbReference type="EMDB" id="EMD-10516"/>
<dbReference type="EMDB" id="EMD-10518"/>
<dbReference type="EMDB" id="EMD-10536"/>
<dbReference type="EMDB" id="EMD-13931"/>
<dbReference type="EMDB" id="EMD-17751"/>
<dbReference type="EMDB" id="EMD-19711"/>
<dbReference type="EMDB" id="EMD-2924"/>
<dbReference type="EMDB" id="EMD-2925"/>
<dbReference type="EMDB" id="EMD-3385"/>
<dbReference type="EMDB" id="EMD-3386"/>
<dbReference type="EMDB" id="EMD-3387"/>
<dbReference type="EMDB" id="EMD-3388"/>
<dbReference type="EMDB" id="EMD-3389"/>
<dbReference type="EMDB" id="EMD-3390"/>
<dbReference type="EMDB" id="EMD-4037"/>
<dbReference type="EMDB" id="EMD-41140"/>
<dbReference type="EMDB" id="EMD-41142"/>
<dbReference type="EMDB" id="EMD-4465"/>
<dbReference type="EMDB" id="EMD-4466"/>
<dbReference type="EMDB" id="EMD-4467"/>
<dbReference type="EMDB" id="EMD-51190"/>
<dbReference type="SMR" id="Q9UJX6"/>
<dbReference type="BioGRID" id="118937">
    <property type="interactions" value="247"/>
</dbReference>
<dbReference type="ComplexPortal" id="CPX-1860">
    <property type="entry name" value="Anaphase-promoting core complex"/>
</dbReference>
<dbReference type="CORUM" id="Q9UJX6"/>
<dbReference type="DIP" id="DIP-32957N"/>
<dbReference type="FunCoup" id="Q9UJX6">
    <property type="interactions" value="3072"/>
</dbReference>
<dbReference type="IntAct" id="Q9UJX6">
    <property type="interactions" value="54"/>
</dbReference>
<dbReference type="MINT" id="Q9UJX6"/>
<dbReference type="STRING" id="9606.ENSP00000314004"/>
<dbReference type="GlyGen" id="Q9UJX6">
    <property type="glycosylation" value="2 sites"/>
</dbReference>
<dbReference type="iPTMnet" id="Q9UJX6"/>
<dbReference type="PhosphoSitePlus" id="Q9UJX6"/>
<dbReference type="BioMuta" id="ANAPC2"/>
<dbReference type="DMDM" id="37537863"/>
<dbReference type="jPOST" id="Q9UJX6"/>
<dbReference type="MassIVE" id="Q9UJX6"/>
<dbReference type="PaxDb" id="9606-ENSP00000314004"/>
<dbReference type="PeptideAtlas" id="Q9UJX6"/>
<dbReference type="ProteomicsDB" id="84688">
    <molecule id="Q9UJX6-1"/>
</dbReference>
<dbReference type="ProteomicsDB" id="84689">
    <molecule id="Q9UJX6-2"/>
</dbReference>
<dbReference type="Pumba" id="Q9UJX6"/>
<dbReference type="TopDownProteomics" id="Q9UJX6-2">
    <molecule id="Q9UJX6-2"/>
</dbReference>
<dbReference type="ABCD" id="Q9UJX6">
    <property type="antibodies" value="3 sequenced antibodies"/>
</dbReference>
<dbReference type="Antibodypedia" id="4358">
    <property type="antibodies" value="304 antibodies from 32 providers"/>
</dbReference>
<dbReference type="DNASU" id="29882"/>
<dbReference type="Ensembl" id="ENST00000323927.3">
    <molecule id="Q9UJX6-1"/>
    <property type="protein sequence ID" value="ENSP00000314004.2"/>
    <property type="gene ID" value="ENSG00000176248.9"/>
</dbReference>
<dbReference type="GeneID" id="29882"/>
<dbReference type="KEGG" id="hsa:29882"/>
<dbReference type="MANE-Select" id="ENST00000323927.3">
    <property type="protein sequence ID" value="ENSP00000314004.2"/>
    <property type="RefSeq nucleotide sequence ID" value="NM_013366.4"/>
    <property type="RefSeq protein sequence ID" value="NP_037498.1"/>
</dbReference>
<dbReference type="UCSC" id="uc004clr.2">
    <molecule id="Q9UJX6-1"/>
    <property type="organism name" value="human"/>
</dbReference>
<dbReference type="AGR" id="HGNC:19989"/>
<dbReference type="CTD" id="29882"/>
<dbReference type="DisGeNET" id="29882"/>
<dbReference type="GeneCards" id="ANAPC2"/>
<dbReference type="HGNC" id="HGNC:19989">
    <property type="gene designation" value="ANAPC2"/>
</dbReference>
<dbReference type="HPA" id="ENSG00000176248">
    <property type="expression patterns" value="Low tissue specificity"/>
</dbReference>
<dbReference type="MIM" id="606946">
    <property type="type" value="gene"/>
</dbReference>
<dbReference type="neXtProt" id="NX_Q9UJX6"/>
<dbReference type="OpenTargets" id="ENSG00000176248"/>
<dbReference type="PharmGKB" id="PA134884359"/>
<dbReference type="VEuPathDB" id="HostDB:ENSG00000176248"/>
<dbReference type="eggNOG" id="KOG2165">
    <property type="taxonomic scope" value="Eukaryota"/>
</dbReference>
<dbReference type="GeneTree" id="ENSGT00390000016127"/>
<dbReference type="HOGENOM" id="CLU_007149_2_0_1"/>
<dbReference type="InParanoid" id="Q9UJX6"/>
<dbReference type="OMA" id="AAKWQES"/>
<dbReference type="OrthoDB" id="5581181at2759"/>
<dbReference type="PAN-GO" id="Q9UJX6">
    <property type="GO annotations" value="4 GO annotations based on evolutionary models"/>
</dbReference>
<dbReference type="PhylomeDB" id="Q9UJX6"/>
<dbReference type="TreeFam" id="TF105442"/>
<dbReference type="PathwayCommons" id="Q9UJX6"/>
<dbReference type="Reactome" id="R-HSA-141430">
    <property type="pathway name" value="Inactivation of APC/C via direct inhibition of the APC/C complex"/>
</dbReference>
<dbReference type="Reactome" id="R-HSA-174048">
    <property type="pathway name" value="APC/C:Cdc20 mediated degradation of Cyclin B"/>
</dbReference>
<dbReference type="Reactome" id="R-HSA-174084">
    <property type="pathway name" value="Autodegradation of Cdh1 by Cdh1:APC/C"/>
</dbReference>
<dbReference type="Reactome" id="R-HSA-174154">
    <property type="pathway name" value="APC/C:Cdc20 mediated degradation of Securin"/>
</dbReference>
<dbReference type="Reactome" id="R-HSA-174178">
    <property type="pathway name" value="APC/C:Cdh1 mediated degradation of Cdc20 and other APC/C:Cdh1 targeted proteins in late mitosis/early G1"/>
</dbReference>
<dbReference type="Reactome" id="R-HSA-174184">
    <property type="pathway name" value="Cdc20:Phospho-APC/C mediated degradation of Cyclin A"/>
</dbReference>
<dbReference type="Reactome" id="R-HSA-176407">
    <property type="pathway name" value="Conversion from APC/C:Cdc20 to APC/C:Cdh1 in late anaphase"/>
</dbReference>
<dbReference type="Reactome" id="R-HSA-176408">
    <property type="pathway name" value="Regulation of APC/C activators between G1/S and early anaphase"/>
</dbReference>
<dbReference type="Reactome" id="R-HSA-176409">
    <property type="pathway name" value="APC/C:Cdc20 mediated degradation of mitotic proteins"/>
</dbReference>
<dbReference type="Reactome" id="R-HSA-176412">
    <property type="pathway name" value="Phosphorylation of the APC/C"/>
</dbReference>
<dbReference type="Reactome" id="R-HSA-179409">
    <property type="pathway name" value="APC-Cdc20 mediated degradation of Nek2A"/>
</dbReference>
<dbReference type="Reactome" id="R-HSA-2467813">
    <property type="pathway name" value="Separation of Sister Chromatids"/>
</dbReference>
<dbReference type="Reactome" id="R-HSA-2559582">
    <property type="pathway name" value="Senescence-Associated Secretory Phenotype (SASP)"/>
</dbReference>
<dbReference type="Reactome" id="R-HSA-68867">
    <property type="pathway name" value="Assembly of the pre-replicative complex"/>
</dbReference>
<dbReference type="Reactome" id="R-HSA-69017">
    <property type="pathway name" value="CDK-mediated phosphorylation and removal of Cdc6"/>
</dbReference>
<dbReference type="Reactome" id="R-HSA-8853884">
    <property type="pathway name" value="Transcriptional Regulation by VENTX"/>
</dbReference>
<dbReference type="Reactome" id="R-HSA-9687136">
    <property type="pathway name" value="Aberrant regulation of mitotic exit in cancer due to RB1 defects"/>
</dbReference>
<dbReference type="Reactome" id="R-HSA-983168">
    <property type="pathway name" value="Antigen processing: Ubiquitination &amp; Proteasome degradation"/>
</dbReference>
<dbReference type="SignaLink" id="Q9UJX6"/>
<dbReference type="SIGNOR" id="Q9UJX6"/>
<dbReference type="UniPathway" id="UPA00143"/>
<dbReference type="BioGRID-ORCS" id="29882">
    <property type="hits" value="804 hits in 1172 CRISPR screens"/>
</dbReference>
<dbReference type="ChiTaRS" id="ANAPC2">
    <property type="organism name" value="human"/>
</dbReference>
<dbReference type="EvolutionaryTrace" id="Q9UJX6"/>
<dbReference type="GeneWiki" id="ANAPC2"/>
<dbReference type="GenomeRNAi" id="29882"/>
<dbReference type="Pharos" id="Q9UJX6">
    <property type="development level" value="Tbio"/>
</dbReference>
<dbReference type="PRO" id="PR:Q9UJX6"/>
<dbReference type="Proteomes" id="UP000005640">
    <property type="component" value="Chromosome 9"/>
</dbReference>
<dbReference type="RNAct" id="Q9UJX6">
    <property type="molecule type" value="protein"/>
</dbReference>
<dbReference type="Bgee" id="ENSG00000176248">
    <property type="expression patterns" value="Expressed in right uterine tube and 165 other cell types or tissues"/>
</dbReference>
<dbReference type="GO" id="GO:0005680">
    <property type="term" value="C:anaphase-promoting complex"/>
    <property type="evidence" value="ECO:0000314"/>
    <property type="project" value="UniProtKB"/>
</dbReference>
<dbReference type="GO" id="GO:0005829">
    <property type="term" value="C:cytosol"/>
    <property type="evidence" value="ECO:0000304"/>
    <property type="project" value="Reactome"/>
</dbReference>
<dbReference type="GO" id="GO:0005654">
    <property type="term" value="C:nucleoplasm"/>
    <property type="evidence" value="ECO:0000304"/>
    <property type="project" value="Reactome"/>
</dbReference>
<dbReference type="GO" id="GO:0031625">
    <property type="term" value="F:ubiquitin protein ligase binding"/>
    <property type="evidence" value="ECO:0007669"/>
    <property type="project" value="InterPro"/>
</dbReference>
<dbReference type="GO" id="GO:0031145">
    <property type="term" value="P:anaphase-promoting complex-dependent catabolic process"/>
    <property type="evidence" value="ECO:0000314"/>
    <property type="project" value="UniProtKB"/>
</dbReference>
<dbReference type="GO" id="GO:0030154">
    <property type="term" value="P:cell differentiation"/>
    <property type="evidence" value="ECO:0007669"/>
    <property type="project" value="UniProtKB-KW"/>
</dbReference>
<dbReference type="GO" id="GO:0051301">
    <property type="term" value="P:cell division"/>
    <property type="evidence" value="ECO:0007669"/>
    <property type="project" value="UniProtKB-KW"/>
</dbReference>
<dbReference type="GO" id="GO:0007091">
    <property type="term" value="P:metaphase/anaphase transition of mitotic cell cycle"/>
    <property type="evidence" value="ECO:0000318"/>
    <property type="project" value="GO_Central"/>
</dbReference>
<dbReference type="GO" id="GO:0010629">
    <property type="term" value="P:negative regulation of gene expression"/>
    <property type="evidence" value="ECO:0007669"/>
    <property type="project" value="Ensembl"/>
</dbReference>
<dbReference type="GO" id="GO:0007399">
    <property type="term" value="P:nervous system development"/>
    <property type="evidence" value="ECO:0007669"/>
    <property type="project" value="UniProtKB-KW"/>
</dbReference>
<dbReference type="GO" id="GO:0045773">
    <property type="term" value="P:positive regulation of axon extension"/>
    <property type="evidence" value="ECO:0007669"/>
    <property type="project" value="Ensembl"/>
</dbReference>
<dbReference type="GO" id="GO:0050775">
    <property type="term" value="P:positive regulation of dendrite morphogenesis"/>
    <property type="evidence" value="ECO:0007669"/>
    <property type="project" value="Ensembl"/>
</dbReference>
<dbReference type="GO" id="GO:0090129">
    <property type="term" value="P:positive regulation of synapse maturation"/>
    <property type="evidence" value="ECO:0000250"/>
    <property type="project" value="UniProtKB"/>
</dbReference>
<dbReference type="GO" id="GO:0031915">
    <property type="term" value="P:positive regulation of synaptic plasticity"/>
    <property type="evidence" value="ECO:0000250"/>
    <property type="project" value="UniProtKB"/>
</dbReference>
<dbReference type="GO" id="GO:0141198">
    <property type="term" value="P:protein branched polyubiquitination"/>
    <property type="evidence" value="ECO:0000314"/>
    <property type="project" value="UniProtKB"/>
</dbReference>
<dbReference type="GO" id="GO:0070979">
    <property type="term" value="P:protein K11-linked ubiquitination"/>
    <property type="evidence" value="ECO:0000314"/>
    <property type="project" value="UniProtKB"/>
</dbReference>
<dbReference type="GO" id="GO:0070936">
    <property type="term" value="P:protein K48-linked ubiquitination"/>
    <property type="evidence" value="ECO:0000314"/>
    <property type="project" value="UniProtKB"/>
</dbReference>
<dbReference type="GO" id="GO:0051445">
    <property type="term" value="P:regulation of meiotic cell cycle"/>
    <property type="evidence" value="ECO:0000303"/>
    <property type="project" value="ComplexPortal"/>
</dbReference>
<dbReference type="GO" id="GO:0007346">
    <property type="term" value="P:regulation of mitotic cell cycle"/>
    <property type="evidence" value="ECO:0000303"/>
    <property type="project" value="ComplexPortal"/>
</dbReference>
<dbReference type="DisProt" id="DP01526"/>
<dbReference type="FunFam" id="1.10.10.10:FF:000284">
    <property type="entry name" value="Anaphase-promoting complex subunit 2"/>
    <property type="match status" value="1"/>
</dbReference>
<dbReference type="FunFam" id="1.20.1310.10:FF:000027">
    <property type="entry name" value="Anaphase-promoting complex subunit 2"/>
    <property type="match status" value="1"/>
</dbReference>
<dbReference type="FunFam" id="3.30.230.130:FF:000008">
    <property type="entry name" value="anaphase-promoting complex subunit 2"/>
    <property type="match status" value="1"/>
</dbReference>
<dbReference type="Gene3D" id="1.20.1310.10">
    <property type="entry name" value="Cullin Repeats"/>
    <property type="match status" value="1"/>
</dbReference>
<dbReference type="Gene3D" id="3.30.230.130">
    <property type="entry name" value="Cullin, Chain C, Domain 2"/>
    <property type="match status" value="1"/>
</dbReference>
<dbReference type="Gene3D" id="1.10.10.10">
    <property type="entry name" value="Winged helix-like DNA-binding domain superfamily/Winged helix DNA-binding domain"/>
    <property type="match status" value="1"/>
</dbReference>
<dbReference type="InterPro" id="IPR044554">
    <property type="entry name" value="APC2-like"/>
</dbReference>
<dbReference type="InterPro" id="IPR014786">
    <property type="entry name" value="APC2_C"/>
</dbReference>
<dbReference type="InterPro" id="IPR016158">
    <property type="entry name" value="Cullin_homology"/>
</dbReference>
<dbReference type="InterPro" id="IPR036317">
    <property type="entry name" value="Cullin_homology_sf"/>
</dbReference>
<dbReference type="InterPro" id="IPR001373">
    <property type="entry name" value="Cullin_N"/>
</dbReference>
<dbReference type="InterPro" id="IPR036388">
    <property type="entry name" value="WH-like_DNA-bd_sf"/>
</dbReference>
<dbReference type="InterPro" id="IPR036390">
    <property type="entry name" value="WH_DNA-bd_sf"/>
</dbReference>
<dbReference type="PANTHER" id="PTHR45957">
    <property type="entry name" value="ANAPHASE-PROMOTING COMPLEX SUBUNIT 2"/>
    <property type="match status" value="1"/>
</dbReference>
<dbReference type="PANTHER" id="PTHR45957:SF1">
    <property type="entry name" value="ANAPHASE-PROMOTING COMPLEX SUBUNIT 2"/>
    <property type="match status" value="1"/>
</dbReference>
<dbReference type="Pfam" id="PF08672">
    <property type="entry name" value="ANAPC2"/>
    <property type="match status" value="1"/>
</dbReference>
<dbReference type="Pfam" id="PF00888">
    <property type="entry name" value="Cullin"/>
    <property type="match status" value="1"/>
</dbReference>
<dbReference type="SMART" id="SM01013">
    <property type="entry name" value="APC2"/>
    <property type="match status" value="1"/>
</dbReference>
<dbReference type="SMART" id="SM00182">
    <property type="entry name" value="CULLIN"/>
    <property type="match status" value="1"/>
</dbReference>
<dbReference type="SUPFAM" id="SSF75632">
    <property type="entry name" value="Cullin homology domain"/>
    <property type="match status" value="1"/>
</dbReference>
<dbReference type="SUPFAM" id="SSF46785">
    <property type="entry name" value="Winged helix' DNA-binding domain"/>
    <property type="match status" value="1"/>
</dbReference>
<dbReference type="PROSITE" id="PS50069">
    <property type="entry name" value="CULLIN_2"/>
    <property type="match status" value="1"/>
</dbReference>
<sequence length="822" mass="93828">MAAAVVVAEGDSDSRPGQELLVAWNTVSTGLVPPAALGLVSSRTSGAVPPKEEELRAAVEVLRGHGLHSVLEEWFVEVLQNDLQANISPEFWNAISQCENSADEPQCLLLLLDAFGLLESRLDPYLRSLELLEKWTRLGLLMGTGAQGLREEVHTMLRGVLFFSTPRTFQEMIQRLYGCFLRVYMQSKRKGEGGTDPELEGELDSRYARRRYYRLLQSPLCAGCSSDKQQCWCRQALEQFHQLSQVLHRLSLLERVSAEAVTTTLHQVTRERMEDRCRGEYERSFLREFHKWIERVVGWLGKVFLQDGPARPASPEAGNTLRRWRCHVQRFFYRIYASLRIEELFSIVRDFPDSRPAIEDLKYCLERTDQRQQLLVSLKAALETRLLHPGVNTCDIITLYISAIKALRVLDPSMVILEVACEPIRRYLRTREDTVRQIVAGLTGDSDGTGDLAVELSKTDPASLETGQDSEDDSGEPEDWVPDPVDADPGKSSSKRRSSDIISLLVSIYGSKDLFINEYRSLLADRLLHQFSFSPEREIRNVELLKLRFGEAPMHFCEVMLKDMADSRRINANIREEDEKRPAEEQPPFGVYAVILSSEFWPPFKDEKLEVPEDIRAALEAYCKKYEQLKAMRTLSWKHTLGLVTMDVELADRTLSVAVTPVQAVILLYFQDQASWTLEELSKAVKMPVALLRRRMSVWLQQGVLREEPPGTFSVIEEERPQDRDNMVLIDSDDESDSGMASQADQKEEELLLFWTYIQAMLTNLESLSLDRIYNMLRMFVVTGPALAEIDLQELQGYLQKKVRDQQLVYSAGVYRLPKNCS</sequence>
<organism>
    <name type="scientific">Homo sapiens</name>
    <name type="common">Human</name>
    <dbReference type="NCBI Taxonomy" id="9606"/>
    <lineage>
        <taxon>Eukaryota</taxon>
        <taxon>Metazoa</taxon>
        <taxon>Chordata</taxon>
        <taxon>Craniata</taxon>
        <taxon>Vertebrata</taxon>
        <taxon>Euteleostomi</taxon>
        <taxon>Mammalia</taxon>
        <taxon>Eutheria</taxon>
        <taxon>Euarchontoglires</taxon>
        <taxon>Primates</taxon>
        <taxon>Haplorrhini</taxon>
        <taxon>Catarrhini</taxon>
        <taxon>Hominidae</taxon>
        <taxon>Homo</taxon>
    </lineage>
</organism>
<protein>
    <recommendedName>
        <fullName>Anaphase-promoting complex subunit 2</fullName>
        <shortName>APC2</shortName>
    </recommendedName>
    <alternativeName>
        <fullName>Cyclosome subunit 2</fullName>
    </alternativeName>
</protein>
<proteinExistence type="evidence at protein level"/>
<gene>
    <name type="primary">ANAPC2</name>
    <name type="synonym">APC2</name>
    <name type="synonym">KIAA1406</name>
</gene>
<name>ANC2_HUMAN</name>
<evidence type="ECO:0000250" key="1">
    <source>
        <dbReference type="UniProtKB" id="Q8BZQ7"/>
    </source>
</evidence>
<evidence type="ECO:0000255" key="2">
    <source>
        <dbReference type="PROSITE-ProRule" id="PRU00330"/>
    </source>
</evidence>
<evidence type="ECO:0000256" key="3">
    <source>
        <dbReference type="SAM" id="MobiDB-lite"/>
    </source>
</evidence>
<evidence type="ECO:0000269" key="4">
    <source>
    </source>
</evidence>
<evidence type="ECO:0000269" key="5">
    <source>
    </source>
</evidence>
<evidence type="ECO:0000269" key="6">
    <source>
    </source>
</evidence>
<evidence type="ECO:0000269" key="7">
    <source>
    </source>
</evidence>
<evidence type="ECO:0000269" key="8">
    <source>
    </source>
</evidence>
<evidence type="ECO:0000269" key="9">
    <source>
    </source>
</evidence>
<evidence type="ECO:0000269" key="10">
    <source>
    </source>
</evidence>
<evidence type="ECO:0000269" key="11">
    <source>
    </source>
</evidence>
<evidence type="ECO:0000269" key="12">
    <source>
    </source>
</evidence>
<evidence type="ECO:0000303" key="13">
    <source>
    </source>
</evidence>
<evidence type="ECO:0000305" key="14"/>
<evidence type="ECO:0007744" key="15">
    <source>
        <dbReference type="PDB" id="4UI9"/>
    </source>
</evidence>
<evidence type="ECO:0007744" key="16">
    <source>
        <dbReference type="PDB" id="5A31"/>
    </source>
</evidence>
<evidence type="ECO:0007744" key="17">
    <source>
        <dbReference type="PDB" id="5L9T"/>
    </source>
</evidence>
<evidence type="ECO:0007744" key="18">
    <source>
        <dbReference type="PDB" id="5L9U"/>
    </source>
</evidence>
<evidence type="ECO:0007744" key="19">
    <source>
    </source>
</evidence>
<evidence type="ECO:0007744" key="20">
    <source>
    </source>
</evidence>
<evidence type="ECO:0007744" key="21">
    <source>
    </source>
</evidence>
<evidence type="ECO:0007744" key="22">
    <source>
    </source>
</evidence>
<evidence type="ECO:0007744" key="23">
    <source>
    </source>
</evidence>
<evidence type="ECO:0007829" key="24">
    <source>
        <dbReference type="PDB" id="4YII"/>
    </source>
</evidence>
<evidence type="ECO:0007829" key="25">
    <source>
        <dbReference type="PDB" id="5G05"/>
    </source>
</evidence>
<evidence type="ECO:0007829" key="26">
    <source>
        <dbReference type="PDB" id="6NXK"/>
    </source>
</evidence>
<evidence type="ECO:0007829" key="27">
    <source>
        <dbReference type="PDB" id="6Q6G"/>
    </source>
</evidence>
<evidence type="ECO:0007829" key="28">
    <source>
        <dbReference type="PDB" id="6Q6H"/>
    </source>
</evidence>
<evidence type="ECO:0007829" key="29">
    <source>
        <dbReference type="PDB" id="8PKP"/>
    </source>
</evidence>
<evidence type="ECO:0007829" key="30">
    <source>
        <dbReference type="PDB" id="8TAU"/>
    </source>
</evidence>
<evidence type="ECO:0007829" key="31">
    <source>
        <dbReference type="PDB" id="9GAW"/>
    </source>
</evidence>
<feature type="chain" id="PRO_0000119811" description="Anaphase-promoting complex subunit 2">
    <location>
        <begin position="1"/>
        <end position="822"/>
    </location>
</feature>
<feature type="region of interest" description="Disordered" evidence="3">
    <location>
        <begin position="450"/>
        <end position="495"/>
    </location>
</feature>
<feature type="region of interest" description="Cullin homology" evidence="12">
    <location>
        <begin position="502"/>
        <end position="700"/>
    </location>
</feature>
<feature type="compositionally biased region" description="Acidic residues" evidence="3">
    <location>
        <begin position="468"/>
        <end position="481"/>
    </location>
</feature>
<feature type="modified residue" description="Phosphoserine" evidence="19 20 21 23">
    <location>
        <position position="218"/>
    </location>
</feature>
<feature type="modified residue" description="Phosphoserine" evidence="5 21 23">
    <location>
        <position position="314"/>
    </location>
</feature>
<feature type="modified residue" description="Phosphoserine" evidence="20 22">
    <location>
        <position position="470"/>
    </location>
</feature>
<feature type="modified residue" description="Phosphoserine" evidence="5 20 23">
    <location>
        <position position="534"/>
    </location>
</feature>
<feature type="modified residue" description="Phosphoserine" evidence="1">
    <location>
        <position position="697"/>
    </location>
</feature>
<feature type="modified residue" description="Phosphotyrosine" evidence="1">
    <location>
        <position position="810"/>
    </location>
</feature>
<feature type="splice variant" id="VSP_008463" description="In isoform 2." evidence="13">
    <location>
        <begin position="350"/>
        <end position="352"/>
    </location>
</feature>
<feature type="mutagenesis site" description="Impairs UBE2S-mediated polyubiquitination, decreasing substrate affinity, does not affect UBE2C-mediated multiubiquitination; when associated with K-353." evidence="9">
    <original>D</original>
    <variation>K</variation>
    <location>
        <position position="350"/>
    </location>
</feature>
<feature type="mutagenesis site" description="Impairs UBE2S-mediated polyubiquitination, decreasing substrate affinity, does not affect UBE2C-mediated multiubiquitination; when associated with K-350." evidence="9">
    <original>D</original>
    <variation>K</variation>
    <location>
        <position position="353"/>
    </location>
</feature>
<feature type="helix" evidence="31">
    <location>
        <begin position="18"/>
        <end position="31"/>
    </location>
</feature>
<feature type="turn" evidence="31">
    <location>
        <begin position="52"/>
        <end position="54"/>
    </location>
</feature>
<feature type="helix" evidence="31">
    <location>
        <begin position="57"/>
        <end position="64"/>
    </location>
</feature>
<feature type="helix" evidence="31">
    <location>
        <begin position="68"/>
        <end position="70"/>
    </location>
</feature>
<feature type="helix" evidence="31">
    <location>
        <begin position="71"/>
        <end position="85"/>
    </location>
</feature>
<feature type="helix" evidence="31">
    <location>
        <begin position="87"/>
        <end position="99"/>
    </location>
</feature>
<feature type="helix" evidence="31">
    <location>
        <begin position="104"/>
        <end position="137"/>
    </location>
</feature>
<feature type="strand" evidence="27">
    <location>
        <begin position="138"/>
        <end position="141"/>
    </location>
</feature>
<feature type="strand" evidence="31">
    <location>
        <begin position="145"/>
        <end position="147"/>
    </location>
</feature>
<feature type="helix" evidence="31">
    <location>
        <begin position="149"/>
        <end position="161"/>
    </location>
</feature>
<feature type="strand" evidence="31">
    <location>
        <begin position="162"/>
        <end position="164"/>
    </location>
</feature>
<feature type="helix" evidence="31">
    <location>
        <begin position="167"/>
        <end position="188"/>
    </location>
</feature>
<feature type="helix" evidence="31">
    <location>
        <begin position="192"/>
        <end position="194"/>
    </location>
</feature>
<feature type="turn" evidence="31">
    <location>
        <begin position="197"/>
        <end position="199"/>
    </location>
</feature>
<feature type="helix" evidence="31">
    <location>
        <begin position="206"/>
        <end position="217"/>
    </location>
</feature>
<feature type="strand" evidence="29">
    <location>
        <begin position="219"/>
        <end position="221"/>
    </location>
</feature>
<feature type="strand" evidence="31">
    <location>
        <begin position="222"/>
        <end position="226"/>
    </location>
</feature>
<feature type="helix" evidence="31">
    <location>
        <begin position="228"/>
        <end position="230"/>
    </location>
</feature>
<feature type="helix" evidence="31">
    <location>
        <begin position="233"/>
        <end position="248"/>
    </location>
</feature>
<feature type="turn" evidence="31">
    <location>
        <begin position="249"/>
        <end position="251"/>
    </location>
</feature>
<feature type="helix" evidence="31">
    <location>
        <begin position="253"/>
        <end position="256"/>
    </location>
</feature>
<feature type="helix" evidence="31">
    <location>
        <begin position="258"/>
        <end position="277"/>
    </location>
</feature>
<feature type="helix" evidence="31">
    <location>
        <begin position="286"/>
        <end position="303"/>
    </location>
</feature>
<feature type="strand" evidence="30">
    <location>
        <begin position="306"/>
        <end position="308"/>
    </location>
</feature>
<feature type="turn" evidence="30">
    <location>
        <begin position="310"/>
        <end position="312"/>
    </location>
</feature>
<feature type="helix" evidence="31">
    <location>
        <begin position="320"/>
        <end position="342"/>
    </location>
</feature>
<feature type="helix" evidence="31">
    <location>
        <begin position="344"/>
        <end position="349"/>
    </location>
</feature>
<feature type="helix" evidence="31">
    <location>
        <begin position="351"/>
        <end position="365"/>
    </location>
</feature>
<feature type="helix" evidence="31">
    <location>
        <begin position="371"/>
        <end position="385"/>
    </location>
</feature>
<feature type="helix" evidence="31">
    <location>
        <begin position="393"/>
        <end position="410"/>
    </location>
</feature>
<feature type="helix" evidence="31">
    <location>
        <begin position="415"/>
        <end position="430"/>
    </location>
</feature>
<feature type="strand" evidence="31">
    <location>
        <begin position="431"/>
        <end position="433"/>
    </location>
</feature>
<feature type="helix" evidence="31">
    <location>
        <begin position="434"/>
        <end position="441"/>
    </location>
</feature>
<feature type="strand" evidence="31">
    <location>
        <begin position="445"/>
        <end position="447"/>
    </location>
</feature>
<feature type="helix" evidence="31">
    <location>
        <begin position="451"/>
        <end position="457"/>
    </location>
</feature>
<feature type="helix" evidence="31">
    <location>
        <begin position="477"/>
        <end position="479"/>
    </location>
</feature>
<feature type="strand" evidence="27">
    <location>
        <begin position="485"/>
        <end position="487"/>
    </location>
</feature>
<feature type="helix" evidence="31">
    <location>
        <begin position="501"/>
        <end position="509"/>
    </location>
</feature>
<feature type="helix" evidence="31">
    <location>
        <begin position="512"/>
        <end position="529"/>
    </location>
</feature>
<feature type="strand" evidence="27">
    <location>
        <begin position="531"/>
        <end position="533"/>
    </location>
</feature>
<feature type="helix" evidence="31">
    <location>
        <begin position="535"/>
        <end position="549"/>
    </location>
</feature>
<feature type="helix" evidence="28">
    <location>
        <begin position="552"/>
        <end position="554"/>
    </location>
</feature>
<feature type="helix" evidence="31">
    <location>
        <begin position="555"/>
        <end position="580"/>
    </location>
</feature>
<feature type="turn" evidence="31">
    <location>
        <begin position="583"/>
        <end position="585"/>
    </location>
</feature>
<feature type="strand" evidence="31">
    <location>
        <begin position="588"/>
        <end position="591"/>
    </location>
</feature>
<feature type="turn" evidence="31">
    <location>
        <begin position="598"/>
        <end position="600"/>
    </location>
</feature>
<feature type="strand" evidence="27">
    <location>
        <begin position="601"/>
        <end position="603"/>
    </location>
</feature>
<feature type="helix" evidence="31">
    <location>
        <begin position="613"/>
        <end position="629"/>
    </location>
</feature>
<feature type="strand" evidence="31">
    <location>
        <begin position="630"/>
        <end position="632"/>
    </location>
</feature>
<feature type="strand" evidence="31">
    <location>
        <begin position="635"/>
        <end position="637"/>
    </location>
</feature>
<feature type="strand" evidence="31">
    <location>
        <begin position="639"/>
        <end position="642"/>
    </location>
</feature>
<feature type="strand" evidence="29">
    <location>
        <begin position="644"/>
        <end position="649"/>
    </location>
</feature>
<feature type="strand" evidence="27">
    <location>
        <begin position="650"/>
        <end position="653"/>
    </location>
</feature>
<feature type="strand" evidence="29">
    <location>
        <begin position="654"/>
        <end position="659"/>
    </location>
</feature>
<feature type="helix" evidence="31">
    <location>
        <begin position="661"/>
        <end position="670"/>
    </location>
</feature>
<feature type="strand" evidence="25">
    <location>
        <begin position="672"/>
        <end position="675"/>
    </location>
</feature>
<feature type="helix" evidence="31">
    <location>
        <begin position="678"/>
        <end position="685"/>
    </location>
</feature>
<feature type="helix" evidence="31">
    <location>
        <begin position="689"/>
        <end position="702"/>
    </location>
</feature>
<feature type="strand" evidence="31">
    <location>
        <begin position="704"/>
        <end position="706"/>
    </location>
</feature>
<feature type="strand" evidence="25">
    <location>
        <begin position="709"/>
        <end position="711"/>
    </location>
</feature>
<feature type="strand" evidence="30">
    <location>
        <begin position="713"/>
        <end position="715"/>
    </location>
</feature>
<feature type="strand" evidence="27">
    <location>
        <begin position="722"/>
        <end position="725"/>
    </location>
</feature>
<feature type="helix" evidence="24">
    <location>
        <begin position="748"/>
        <end position="765"/>
    </location>
</feature>
<feature type="helix" evidence="24">
    <location>
        <begin position="770"/>
        <end position="780"/>
    </location>
</feature>
<feature type="turn" evidence="26">
    <location>
        <begin position="781"/>
        <end position="783"/>
    </location>
</feature>
<feature type="helix" evidence="26">
    <location>
        <begin position="785"/>
        <end position="787"/>
    </location>
</feature>
<feature type="helix" evidence="24">
    <location>
        <begin position="792"/>
        <end position="804"/>
    </location>
</feature>
<feature type="strand" evidence="24">
    <location>
        <begin position="807"/>
        <end position="811"/>
    </location>
</feature>
<feature type="strand" evidence="24">
    <location>
        <begin position="814"/>
        <end position="816"/>
    </location>
</feature>
<reference key="1">
    <citation type="journal article" date="1998" name="Science">
        <title>Identification of a cullin homology region in a subunit of the anaphase-promoting complex.</title>
        <authorList>
            <person name="Yu H."/>
            <person name="Peters J.-M."/>
            <person name="King R.W."/>
            <person name="Page A.M."/>
            <person name="Hieter P."/>
            <person name="Kirschner M.W."/>
        </authorList>
    </citation>
    <scope>NUCLEOTIDE SEQUENCE [MRNA] (ISOFORM 1)</scope>
    <scope>CULLIN HOMOLOGY REGION</scope>
    <scope>SUBUNIT</scope>
</reference>
<reference key="2">
    <citation type="journal article" date="2004" name="Nature">
        <title>DNA sequence and analysis of human chromosome 9.</title>
        <authorList>
            <person name="Humphray S.J."/>
            <person name="Oliver K."/>
            <person name="Hunt A.R."/>
            <person name="Plumb R.W."/>
            <person name="Loveland J.E."/>
            <person name="Howe K.L."/>
            <person name="Andrews T.D."/>
            <person name="Searle S."/>
            <person name="Hunt S.E."/>
            <person name="Scott C.E."/>
            <person name="Jones M.C."/>
            <person name="Ainscough R."/>
            <person name="Almeida J.P."/>
            <person name="Ambrose K.D."/>
            <person name="Ashwell R.I.S."/>
            <person name="Babbage A.K."/>
            <person name="Babbage S."/>
            <person name="Bagguley C.L."/>
            <person name="Bailey J."/>
            <person name="Banerjee R."/>
            <person name="Barker D.J."/>
            <person name="Barlow K.F."/>
            <person name="Bates K."/>
            <person name="Beasley H."/>
            <person name="Beasley O."/>
            <person name="Bird C.P."/>
            <person name="Bray-Allen S."/>
            <person name="Brown A.J."/>
            <person name="Brown J.Y."/>
            <person name="Burford D."/>
            <person name="Burrill W."/>
            <person name="Burton J."/>
            <person name="Carder C."/>
            <person name="Carter N.P."/>
            <person name="Chapman J.C."/>
            <person name="Chen Y."/>
            <person name="Clarke G."/>
            <person name="Clark S.Y."/>
            <person name="Clee C.M."/>
            <person name="Clegg S."/>
            <person name="Collier R.E."/>
            <person name="Corby N."/>
            <person name="Crosier M."/>
            <person name="Cummings A.T."/>
            <person name="Davies J."/>
            <person name="Dhami P."/>
            <person name="Dunn M."/>
            <person name="Dutta I."/>
            <person name="Dyer L.W."/>
            <person name="Earthrowl M.E."/>
            <person name="Faulkner L."/>
            <person name="Fleming C.J."/>
            <person name="Frankish A."/>
            <person name="Frankland J.A."/>
            <person name="French L."/>
            <person name="Fricker D.G."/>
            <person name="Garner P."/>
            <person name="Garnett J."/>
            <person name="Ghori J."/>
            <person name="Gilbert J.G.R."/>
            <person name="Glison C."/>
            <person name="Grafham D.V."/>
            <person name="Gribble S."/>
            <person name="Griffiths C."/>
            <person name="Griffiths-Jones S."/>
            <person name="Grocock R."/>
            <person name="Guy J."/>
            <person name="Hall R.E."/>
            <person name="Hammond S."/>
            <person name="Harley J.L."/>
            <person name="Harrison E.S.I."/>
            <person name="Hart E.A."/>
            <person name="Heath P.D."/>
            <person name="Henderson C.D."/>
            <person name="Hopkins B.L."/>
            <person name="Howard P.J."/>
            <person name="Howden P.J."/>
            <person name="Huckle E."/>
            <person name="Johnson C."/>
            <person name="Johnson D."/>
            <person name="Joy A.A."/>
            <person name="Kay M."/>
            <person name="Keenan S."/>
            <person name="Kershaw J.K."/>
            <person name="Kimberley A.M."/>
            <person name="King A."/>
            <person name="Knights A."/>
            <person name="Laird G.K."/>
            <person name="Langford C."/>
            <person name="Lawlor S."/>
            <person name="Leongamornlert D.A."/>
            <person name="Leversha M."/>
            <person name="Lloyd C."/>
            <person name="Lloyd D.M."/>
            <person name="Lovell J."/>
            <person name="Martin S."/>
            <person name="Mashreghi-Mohammadi M."/>
            <person name="Matthews L."/>
            <person name="McLaren S."/>
            <person name="McLay K.E."/>
            <person name="McMurray A."/>
            <person name="Milne S."/>
            <person name="Nickerson T."/>
            <person name="Nisbett J."/>
            <person name="Nordsiek G."/>
            <person name="Pearce A.V."/>
            <person name="Peck A.I."/>
            <person name="Porter K.M."/>
            <person name="Pandian R."/>
            <person name="Pelan S."/>
            <person name="Phillimore B."/>
            <person name="Povey S."/>
            <person name="Ramsey Y."/>
            <person name="Rand V."/>
            <person name="Scharfe M."/>
            <person name="Sehra H.K."/>
            <person name="Shownkeen R."/>
            <person name="Sims S.K."/>
            <person name="Skuce C.D."/>
            <person name="Smith M."/>
            <person name="Steward C.A."/>
            <person name="Swarbreck D."/>
            <person name="Sycamore N."/>
            <person name="Tester J."/>
            <person name="Thorpe A."/>
            <person name="Tracey A."/>
            <person name="Tromans A."/>
            <person name="Thomas D.W."/>
            <person name="Wall M."/>
            <person name="Wallis J.M."/>
            <person name="West A.P."/>
            <person name="Whitehead S.L."/>
            <person name="Willey D.L."/>
            <person name="Williams S.A."/>
            <person name="Wilming L."/>
            <person name="Wray P.W."/>
            <person name="Young L."/>
            <person name="Ashurst J.L."/>
            <person name="Coulson A."/>
            <person name="Blocker H."/>
            <person name="Durbin R.M."/>
            <person name="Sulston J.E."/>
            <person name="Hubbard T."/>
            <person name="Jackson M.J."/>
            <person name="Bentley D.R."/>
            <person name="Beck S."/>
            <person name="Rogers J."/>
            <person name="Dunham I."/>
        </authorList>
    </citation>
    <scope>NUCLEOTIDE SEQUENCE [LARGE SCALE GENOMIC DNA]</scope>
</reference>
<reference key="3">
    <citation type="journal article" date="2004" name="Genome Res.">
        <title>The status, quality, and expansion of the NIH full-length cDNA project: the Mammalian Gene Collection (MGC).</title>
        <authorList>
            <consortium name="The MGC Project Team"/>
        </authorList>
    </citation>
    <scope>NUCLEOTIDE SEQUENCE [LARGE SCALE MRNA] (ISOFORM 1)</scope>
    <scope>NUCLEOTIDE SEQUENCE [LARGE SCALE MRNA] OF 243-822 (ISOFORM 2)</scope>
    <source>
        <tissue>Brain</tissue>
        <tissue>Cervix</tissue>
        <tissue>Ovary</tissue>
    </source>
</reference>
<reference key="4">
    <citation type="journal article" date="2000" name="DNA Res.">
        <title>Prediction of the coding sequences of unidentified human genes. XVI. The complete sequences of 150 new cDNA clones from brain which code for large proteins in vitro.</title>
        <authorList>
            <person name="Nagase T."/>
            <person name="Kikuno R."/>
            <person name="Ishikawa K."/>
            <person name="Hirosawa M."/>
            <person name="Ohara O."/>
        </authorList>
    </citation>
    <scope>NUCLEOTIDE SEQUENCE [LARGE SCALE MRNA] OF 252-822 (ISOFORM 1)</scope>
    <source>
        <tissue>Brain</tissue>
    </source>
</reference>
<reference key="5">
    <citation type="journal article" date="2002" name="DNA Res.">
        <title>Construction of expression-ready cDNA clones for KIAA genes: manual curation of 330 KIAA cDNA clones.</title>
        <authorList>
            <person name="Nakajima D."/>
            <person name="Okazaki N."/>
            <person name="Yamakawa H."/>
            <person name="Kikuno R."/>
            <person name="Ohara O."/>
            <person name="Nagase T."/>
        </authorList>
    </citation>
    <scope>SEQUENCE REVISION</scope>
</reference>
<reference key="6">
    <citation type="journal article" date="2001" name="Mol. Biol. Cell">
        <title>APC2 cullin protein and APC11 RING protein comprise the minimal ubiquitin ligase module of the anaphase-promoting complex.</title>
        <authorList>
            <person name="Tang Z."/>
            <person name="Li B."/>
            <person name="Bharadwaj R."/>
            <person name="Zhu H."/>
            <person name="Oezkan E."/>
            <person name="Hakala K."/>
            <person name="Deisenhofer J."/>
            <person name="Yu H."/>
        </authorList>
    </citation>
    <scope>FUNCTION</scope>
    <scope>INTERACTION WITH ANAPC11 AND UBCH10</scope>
</reference>
<reference key="7">
    <citation type="journal article" date="2003" name="EMBO J.">
        <title>Mitotic regulation of the human anaphase-promoting complex by phosphorylation.</title>
        <authorList>
            <person name="Kraft C."/>
            <person name="Herzog F."/>
            <person name="Gieffers C."/>
            <person name="Mechtler K."/>
            <person name="Hagting A."/>
            <person name="Pines J."/>
            <person name="Peters J.-M."/>
        </authorList>
    </citation>
    <scope>PHOSPHORYLATION AT SER-314 AND SER-534</scope>
</reference>
<reference key="8">
    <citation type="journal article" date="2006" name="Nat. Biotechnol.">
        <title>A probability-based approach for high-throughput protein phosphorylation analysis and site localization.</title>
        <authorList>
            <person name="Beausoleil S.A."/>
            <person name="Villen J."/>
            <person name="Gerber S.A."/>
            <person name="Rush J."/>
            <person name="Gygi S.P."/>
        </authorList>
    </citation>
    <scope>PHOSPHORYLATION [LARGE SCALE ANALYSIS] AT SER-218</scope>
    <scope>IDENTIFICATION BY MASS SPECTROMETRY [LARGE SCALE ANALYSIS]</scope>
    <source>
        <tissue>Cervix carcinoma</tissue>
    </source>
</reference>
<reference key="9">
    <citation type="journal article" date="2008" name="Cell">
        <title>Mechanism of ubiquitin-chain formation by the human anaphase-promoting complex.</title>
        <authorList>
            <person name="Jin L."/>
            <person name="Williamson A."/>
            <person name="Banerjee S."/>
            <person name="Philipp I."/>
            <person name="Rape M."/>
        </authorList>
    </citation>
    <scope>FUNCTION OF THE APC/C</scope>
</reference>
<reference key="10">
    <citation type="journal article" date="2008" name="Mol. Cell">
        <title>Kinase-selective enrichment enables quantitative phosphoproteomics of the kinome across the cell cycle.</title>
        <authorList>
            <person name="Daub H."/>
            <person name="Olsen J.V."/>
            <person name="Bairlein M."/>
            <person name="Gnad F."/>
            <person name="Oppermann F.S."/>
            <person name="Korner R."/>
            <person name="Greff Z."/>
            <person name="Keri G."/>
            <person name="Stemmann O."/>
            <person name="Mann M."/>
        </authorList>
    </citation>
    <scope>PHOSPHORYLATION [LARGE SCALE ANALYSIS] AT SER-218 AND SER-314</scope>
    <scope>IDENTIFICATION BY MASS SPECTROMETRY [LARGE SCALE ANALYSIS]</scope>
    <source>
        <tissue>Cervix carcinoma</tissue>
    </source>
</reference>
<reference key="11">
    <citation type="journal article" date="2008" name="Proc. Natl. Acad. Sci. U.S.A.">
        <title>A quantitative atlas of mitotic phosphorylation.</title>
        <authorList>
            <person name="Dephoure N."/>
            <person name="Zhou C."/>
            <person name="Villen J."/>
            <person name="Beausoleil S.A."/>
            <person name="Bakalarski C.E."/>
            <person name="Elledge S.J."/>
            <person name="Gygi S.P."/>
        </authorList>
    </citation>
    <scope>PHOSPHORYLATION [LARGE SCALE ANALYSIS] AT SER-218; SER-470 AND SER-534</scope>
    <scope>IDENTIFICATION BY MASS SPECTROMETRY [LARGE SCALE ANALYSIS]</scope>
    <source>
        <tissue>Cervix carcinoma</tissue>
    </source>
</reference>
<reference key="12">
    <citation type="journal article" date="2009" name="Anal. Chem.">
        <title>Lys-N and trypsin cover complementary parts of the phosphoproteome in a refined SCX-based approach.</title>
        <authorList>
            <person name="Gauci S."/>
            <person name="Helbig A.O."/>
            <person name="Slijper M."/>
            <person name="Krijgsveld J."/>
            <person name="Heck A.J."/>
            <person name="Mohammed S."/>
        </authorList>
    </citation>
    <scope>IDENTIFICATION BY MASS SPECTROMETRY [LARGE SCALE ANALYSIS]</scope>
</reference>
<reference key="13">
    <citation type="journal article" date="2009" name="Sci. Signal.">
        <title>Quantitative phosphoproteomic analysis of T cell receptor signaling reveals system-wide modulation of protein-protein interactions.</title>
        <authorList>
            <person name="Mayya V."/>
            <person name="Lundgren D.H."/>
            <person name="Hwang S.-I."/>
            <person name="Rezaul K."/>
            <person name="Wu L."/>
            <person name="Eng J.K."/>
            <person name="Rodionov V."/>
            <person name="Han D.K."/>
        </authorList>
    </citation>
    <scope>PHOSPHORYLATION [LARGE SCALE ANALYSIS] AT SER-470</scope>
    <scope>IDENTIFICATION BY MASS SPECTROMETRY [LARGE SCALE ANALYSIS]</scope>
    <source>
        <tissue>Leukemic T-cell</tissue>
    </source>
</reference>
<reference key="14">
    <citation type="journal article" date="2011" name="BMC Syst. Biol.">
        <title>Initial characterization of the human central proteome.</title>
        <authorList>
            <person name="Burkard T.R."/>
            <person name="Planyavsky M."/>
            <person name="Kaupe I."/>
            <person name="Breitwieser F.P."/>
            <person name="Buerckstuemmer T."/>
            <person name="Bennett K.L."/>
            <person name="Superti-Furga G."/>
            <person name="Colinge J."/>
        </authorList>
    </citation>
    <scope>IDENTIFICATION BY MASS SPECTROMETRY [LARGE SCALE ANALYSIS]</scope>
</reference>
<reference key="15">
    <citation type="journal article" date="2013" name="J. Proteome Res.">
        <title>Toward a comprehensive characterization of a human cancer cell phosphoproteome.</title>
        <authorList>
            <person name="Zhou H."/>
            <person name="Di Palma S."/>
            <person name="Preisinger C."/>
            <person name="Peng M."/>
            <person name="Polat A.N."/>
            <person name="Heck A.J."/>
            <person name="Mohammed S."/>
        </authorList>
    </citation>
    <scope>PHOSPHORYLATION [LARGE SCALE ANALYSIS] AT SER-218; SER-314 AND SER-534</scope>
    <scope>IDENTIFICATION BY MASS SPECTROMETRY [LARGE SCALE ANALYSIS]</scope>
    <source>
        <tissue>Cervix carcinoma</tissue>
        <tissue>Erythroleukemia</tissue>
    </source>
</reference>
<reference key="16">
    <citation type="journal article" date="2014" name="J. Proteomics">
        <title>An enzyme assisted RP-RPLC approach for in-depth analysis of human liver phosphoproteome.</title>
        <authorList>
            <person name="Bian Y."/>
            <person name="Song C."/>
            <person name="Cheng K."/>
            <person name="Dong M."/>
            <person name="Wang F."/>
            <person name="Huang J."/>
            <person name="Sun D."/>
            <person name="Wang L."/>
            <person name="Ye M."/>
            <person name="Zou H."/>
        </authorList>
    </citation>
    <scope>IDENTIFICATION BY MASS SPECTROMETRY [LARGE SCALE ANALYSIS]</scope>
    <source>
        <tissue>Liver</tissue>
    </source>
</reference>
<reference key="17">
    <citation type="journal article" date="2017" name="Cell">
        <title>Assembly and function of heterotypic ubiquitin chains in cell-cycle and protein quality control.</title>
        <authorList>
            <person name="Yau R.G."/>
            <person name="Doerner K."/>
            <person name="Castellanos E.R."/>
            <person name="Haakonsen D.L."/>
            <person name="Werner A."/>
            <person name="Wang N."/>
            <person name="Yang X.W."/>
            <person name="Martinez-Martin N."/>
            <person name="Matsumoto M.L."/>
            <person name="Dixit V.M."/>
            <person name="Rape M."/>
        </authorList>
    </citation>
    <scope>FUNCTION</scope>
    <scope>PATHWAY</scope>
</reference>
<reference key="18">
    <citation type="journal article" date="2005" name="Mol. Cell">
        <title>Localization of the coactivator Cdh1 and the cullin subunit Apc2 in a cryo-electron microscopy model of vertebrate APC/C.</title>
        <authorList>
            <person name="Dube P."/>
            <person name="Herzog F."/>
            <person name="Gieffers C."/>
            <person name="Sander B."/>
            <person name="Riedel D."/>
            <person name="Mueller S.A."/>
            <person name="Engel A."/>
            <person name="Peters J.-M."/>
            <person name="Stark H."/>
        </authorList>
    </citation>
    <scope>ELECTRON MICROSCOPY OF THE APC/C</scope>
</reference>
<reference key="19">
    <citation type="journal article" date="2014" name="Nature">
        <title>Molecular architecture and mechanism of the anaphase-promoting complex.</title>
        <authorList>
            <person name="Chang L."/>
            <person name="Zhang Z."/>
            <person name="Yang J."/>
            <person name="McLaughlin S.H."/>
            <person name="Barford D."/>
        </authorList>
    </citation>
    <scope>STRUCTURE BY ELECTRON MICROSCOPY (7.4 ANGSTROMS) OF THE APC/C</scope>
    <scope>SUBUNIT</scope>
</reference>
<reference evidence="15 16" key="20">
    <citation type="journal article" date="2015" name="Nature">
        <title>Atomic structure of the APC/C and its mechanism of protein ubiquitination.</title>
        <authorList>
            <person name="Chang L."/>
            <person name="Zhang Z."/>
            <person name="Yang J."/>
            <person name="McLaughlin S.H."/>
            <person name="Barford D."/>
        </authorList>
    </citation>
    <scope>STRUCTURE BY ELECTRON MICROSCOPY (3.60 ANGSTROMS) OF APC/C</scope>
    <scope>SUBUNIT</scope>
</reference>
<reference evidence="17 18" key="21">
    <citation type="journal article" date="2016" name="Cell">
        <title>Dual RING E3 architectures regulate multiubiquitination and ubiquitin chain elongation by APC/C.</title>
        <authorList>
            <person name="Brown N.G."/>
            <person name="VanderLinden R."/>
            <person name="Watson E.R."/>
            <person name="Weissmann F."/>
            <person name="Ordureau A."/>
            <person name="Wu K.P."/>
            <person name="Zhang W."/>
            <person name="Yu S."/>
            <person name="Mercredi P.Y."/>
            <person name="Harrison J.S."/>
            <person name="Davidson I.F."/>
            <person name="Qiao R."/>
            <person name="Lu Y."/>
            <person name="Dube P."/>
            <person name="Brunner M.R."/>
            <person name="Grace C.R."/>
            <person name="Miller D.J."/>
            <person name="Haselbach D."/>
            <person name="Jarvis M.A."/>
            <person name="Yamaguchi M."/>
            <person name="Yanishevski D."/>
            <person name="Petzold G."/>
            <person name="Sidhu S.S."/>
            <person name="Kuhlman B."/>
            <person name="Kirschner M.W."/>
            <person name="Harper J.W."/>
            <person name="Peters J.M."/>
            <person name="Stark H."/>
            <person name="Schulman B.A."/>
        </authorList>
    </citation>
    <scope>STRUCTURE BY ELECTRON MICROSCOPY (6.40 ANGSTROMS) IN COMPLEX WITH APC/C; UBE2C AND UBE2S</scope>
    <scope>INTERACTION WITH UBE2C AND UBE2S</scope>
    <scope>MUTAGENESIS OF ASP-350 AND ASP-353</scope>
</reference>
<reference key="22">
    <citation type="journal article" date="2022" name="Clin. Genet.">
        <title>A homozygous loss-of-function mutation in FBXO43 causes human non-obstructive azoospermia.</title>
        <authorList>
            <person name="Wu H."/>
            <person name="Zhang X."/>
            <person name="Shen Q."/>
            <person name="Liu Y."/>
            <person name="Gao Y."/>
            <person name="Wang G."/>
            <person name="Lv M."/>
            <person name="Hua R."/>
            <person name="Xu Y."/>
            <person name="Zhou P."/>
            <person name="Wei Z."/>
            <person name="Tao F."/>
            <person name="He X."/>
            <person name="Cao Y."/>
            <person name="Liu M."/>
        </authorList>
    </citation>
    <scope>INTERACTION WITH FBXO43</scope>
</reference>
<accession>Q9UJX6</accession>
<accession>Q5VSG1</accession>
<accession>Q96DG5</accession>
<accession>Q96GG4</accession>
<accession>Q9P2E1</accession>
<comment type="function">
    <text evidence="1 4 6 10">Together with the RING-H2 protein ANAPC11, constitutes the catalytic component of the anaphase promoting complex/cyclosome (APC/C), a cell cycle-regulated E3 ubiquitin ligase that controls progression through mitosis and the G1 phase of the cell cycle (PubMed:11739784, PubMed:18485873). The APC/C complex acts by mediating ubiquitination and subsequent degradation of target proteins: it mainly mediates the formation of 'Lys-11'-linked polyubiquitin chains and, to a lower extent, the formation of 'Lys-48'- and 'Lys-63'-linked polyubiquitin chains (PubMed:11739784, PubMed:18485873). The APC/C complex catalyzes assembly of branched 'Lys-11'-/'Lys-48'-linked branched ubiquitin chains on target proteins (PubMed:29033132). The CDC20-APC/C complex positively regulates the formation of synaptic vesicle clustering at active zone to the presynaptic membrane in postmitotic neurons (By similarity). CDC20-APC/C-induced degradation of NEUROD2 drives presynaptic differentiation (By similarity).</text>
</comment>
<comment type="pathway">
    <text evidence="10">Protein modification; protein ubiquitination.</text>
</comment>
<comment type="subunit">
    <text evidence="1 4 7 8 9 11">The mammalian APC/C is composed at least of 14 distinct subunits ANAPC1, ANAPC2, CDC27/APC3, ANAPC4, ANAPC5, CDC16/APC6, ANAPC7, CDC23/APC8, ANAPC10, ANAPC11, CDC26/APC12, ANAPC13, ANAPC15 and ANAPC16 that assemble into a complex of at least 19 chains with a combined molecular mass of around 1.2 MDa; APC/C interacts with FZR1 and FBXO5 (PubMed:25043029, PubMed:26083744). In the context of the APC/C complex, directly interacts with UBE2C and UBE2S (PubMed:27259151). Interacts (via cullin domain) with ANAPC11 and with UBCH10 (PubMed:11739784). Interacts with NEUROD2 (By similarity). Interacts with FBXO43; the interaction is direct.</text>
</comment>
<comment type="interaction">
    <interactant intactId="EBI-396211">
        <id>Q9UJX6</id>
    </interactant>
    <interactant intactId="EBI-16059332">
        <id>Q9UKT4-1</id>
        <label>FBXO5</label>
    </interactant>
    <organismsDiffer>false</organismsDiffer>
    <experiments>7</experiments>
</comment>
<comment type="interaction">
    <interactant intactId="EBI-396211">
        <id>Q9UJX6</id>
    </interactant>
    <interactant intactId="EBI-2864512">
        <id>P50221</id>
        <label>MEOX1</label>
    </interactant>
    <organismsDiffer>false</organismsDiffer>
    <experiments>3</experiments>
</comment>
<comment type="interaction">
    <interactant intactId="EBI-396211">
        <id>Q9UJX6</id>
    </interactant>
    <interactant intactId="EBI-2339823">
        <id>Q16763</id>
        <label>UBE2S</label>
    </interactant>
    <organismsDiffer>false</organismsDiffer>
    <experiments>4</experiments>
</comment>
<comment type="interaction">
    <interactant intactId="EBI-396211">
        <id>Q9UJX6</id>
    </interactant>
    <interactant intactId="EBI-540834">
        <id>P61964</id>
        <label>WDR5</label>
    </interactant>
    <organismsDiffer>false</organismsDiffer>
    <experiments>3</experiments>
</comment>
<comment type="alternative products">
    <event type="alternative splicing"/>
    <isoform>
        <id>Q9UJX6-1</id>
        <name>1</name>
        <sequence type="displayed"/>
    </isoform>
    <isoform>
        <id>Q9UJX6-2</id>
        <name>2</name>
        <sequence type="described" ref="VSP_008463"/>
    </isoform>
</comment>
<comment type="similarity">
    <text evidence="2">Belongs to the cullin family.</text>
</comment>
<comment type="sequence caution" evidence="14">
    <conflict type="erroneous translation">
        <sequence resource="EMBL-CDS" id="AAH09487"/>
    </conflict>
    <text>Wrong choice of frame.</text>
</comment>